<reference key="1">
    <citation type="journal article" date="1999" name="Biochem. Biophys. Res. Commun.">
        <title>Purification, characterization, and cDNA cloning of a new fibrinogenlytic venom protein, Agkisacutacin, from Agkistrodon acutus venom.</title>
        <authorList>
            <person name="Cheng X."/>
            <person name="Qian Y."/>
            <person name="Liu Q.D."/>
            <person name="Li B.X."/>
            <person name="Zhang M."/>
            <person name="Liu J."/>
        </authorList>
    </citation>
    <scope>NUCLEOTIDE SEQUENCE [MRNA]</scope>
    <scope>PROTEIN SEQUENCE OF 24-50; 59-83; 102-107 AND 112-114</scope>
    <scope>FUNCTION</scope>
    <source>
        <tissue>Venom</tissue>
        <tissue>Venom gland</tissue>
    </source>
</reference>
<reference key="2">
    <citation type="submission" date="2002-03" db="EMBL/GenBank/DDBJ databases">
        <title>B chain of agkisacutacin from Deinagkistrodon acutus.</title>
        <authorList>
            <person name="Yu H."/>
            <person name="Xiang K."/>
            <person name="Wang Y."/>
            <person name="Liu J."/>
        </authorList>
    </citation>
    <scope>NUCLEOTIDE SEQUENCE [MRNA]</scope>
    <source>
        <tissue>Venom gland</tissue>
    </source>
</reference>
<reference key="3">
    <citation type="journal article" date="2000" name="Sheng Wu Hua Xue Yu Sheng Wu Wu Li Xue Bao">
        <title>Purification and characterization of a platelet agglutinating inhibiting protein (Agkisacutacin) from Agkistrodon acutus venom.</title>
        <authorList>
            <person name="Cheng X."/>
            <person name="Xu Z.Y."/>
            <person name="Liu Q.D."/>
            <person name="Li X.-M."/>
            <person name="Li X.Y."/>
            <person name="Liu J."/>
        </authorList>
    </citation>
    <scope>FUNCTION</scope>
    <source>
        <tissue>Venom</tissue>
    </source>
</reference>
<reference key="4">
    <citation type="journal article" date="2005" name="Biochem. Biophys. Res. Commun.">
        <title>A C-type lectin-like protein from Agkistrodon acutus venom binds to both platelet glycoprotein Ib and coagulation factor IX/factor X.</title>
        <authorList>
            <person name="Li W.-F."/>
            <person name="Chen L."/>
            <person name="Li X.-M."/>
            <person name="Liu J."/>
        </authorList>
    </citation>
    <scope>FUNCTION</scope>
    <source>
        <tissue>Venom</tissue>
    </source>
</reference>
<proteinExistence type="evidence at protein level"/>
<dbReference type="EMBL" id="AF176421">
    <property type="protein sequence ID" value="AAF26287.1"/>
    <property type="molecule type" value="mRNA"/>
</dbReference>
<dbReference type="EMBL" id="AY091756">
    <property type="protein sequence ID" value="AAM22785.1"/>
    <property type="molecule type" value="mRNA"/>
</dbReference>
<dbReference type="PIR" id="JC7135">
    <property type="entry name" value="JC7135"/>
</dbReference>
<dbReference type="SMR" id="Q8JIW1"/>
<dbReference type="GO" id="GO:0005576">
    <property type="term" value="C:extracellular region"/>
    <property type="evidence" value="ECO:0007669"/>
    <property type="project" value="UniProtKB-SubCell"/>
</dbReference>
<dbReference type="GO" id="GO:0046872">
    <property type="term" value="F:metal ion binding"/>
    <property type="evidence" value="ECO:0007669"/>
    <property type="project" value="UniProtKB-KW"/>
</dbReference>
<dbReference type="GO" id="GO:0090729">
    <property type="term" value="F:toxin activity"/>
    <property type="evidence" value="ECO:0007669"/>
    <property type="project" value="UniProtKB-KW"/>
</dbReference>
<dbReference type="FunFam" id="3.10.100.10:FF:000087">
    <property type="entry name" value="Snaclec rhodocetin subunit delta"/>
    <property type="match status" value="1"/>
</dbReference>
<dbReference type="Gene3D" id="3.10.100.10">
    <property type="entry name" value="Mannose-Binding Protein A, subunit A"/>
    <property type="match status" value="1"/>
</dbReference>
<dbReference type="InterPro" id="IPR001304">
    <property type="entry name" value="C-type_lectin-like"/>
</dbReference>
<dbReference type="InterPro" id="IPR016186">
    <property type="entry name" value="C-type_lectin-like/link_sf"/>
</dbReference>
<dbReference type="InterPro" id="IPR050111">
    <property type="entry name" value="C-type_lectin/snaclec_domain"/>
</dbReference>
<dbReference type="InterPro" id="IPR018378">
    <property type="entry name" value="C-type_lectin_CS"/>
</dbReference>
<dbReference type="InterPro" id="IPR016187">
    <property type="entry name" value="CTDL_fold"/>
</dbReference>
<dbReference type="PANTHER" id="PTHR22803">
    <property type="entry name" value="MANNOSE, PHOSPHOLIPASE, LECTIN RECEPTOR RELATED"/>
    <property type="match status" value="1"/>
</dbReference>
<dbReference type="Pfam" id="PF00059">
    <property type="entry name" value="Lectin_C"/>
    <property type="match status" value="1"/>
</dbReference>
<dbReference type="PRINTS" id="PR01504">
    <property type="entry name" value="PNCREATITSAP"/>
</dbReference>
<dbReference type="SMART" id="SM00034">
    <property type="entry name" value="CLECT"/>
    <property type="match status" value="1"/>
</dbReference>
<dbReference type="SUPFAM" id="SSF56436">
    <property type="entry name" value="C-type lectin-like"/>
    <property type="match status" value="1"/>
</dbReference>
<dbReference type="PROSITE" id="PS00615">
    <property type="entry name" value="C_TYPE_LECTIN_1"/>
    <property type="match status" value="1"/>
</dbReference>
<dbReference type="PROSITE" id="PS50041">
    <property type="entry name" value="C_TYPE_LECTIN_2"/>
    <property type="match status" value="1"/>
</dbReference>
<accession>Q8JIW1</accession>
<accession>Q9IAM0</accession>
<organism>
    <name type="scientific">Deinagkistrodon acutus</name>
    <name type="common">Hundred-pace snake</name>
    <name type="synonym">Agkistrodon acutus</name>
    <dbReference type="NCBI Taxonomy" id="36307"/>
    <lineage>
        <taxon>Eukaryota</taxon>
        <taxon>Metazoa</taxon>
        <taxon>Chordata</taxon>
        <taxon>Craniata</taxon>
        <taxon>Vertebrata</taxon>
        <taxon>Euteleostomi</taxon>
        <taxon>Lepidosauria</taxon>
        <taxon>Squamata</taxon>
        <taxon>Bifurcata</taxon>
        <taxon>Unidentata</taxon>
        <taxon>Episquamata</taxon>
        <taxon>Toxicofera</taxon>
        <taxon>Serpentes</taxon>
        <taxon>Colubroidea</taxon>
        <taxon>Viperidae</taxon>
        <taxon>Crotalinae</taxon>
        <taxon>Deinagkistrodon</taxon>
    </lineage>
</organism>
<comment type="function">
    <text evidence="3 4 5">Anticoagulant protein which binds to the gamma-carboxyglutamic acid-domain regions of factor IX (F9) and factor X (F10) in the presence of calcium with a 1 to 1 stoichiometry. Also inhibits platelet aggregation by binding to platelet glycoprotein Ibalpha (GP1BA) and functioning as a blocker of von Willebrand factor (VWF). Is devoid of hemorrhagic and lethal activities. Possesses antithrombotic and thrombolytic activities. Also hydrolyzes the Aalpha-chain of fibrinogen (FGA). Does not affect the Bbeta-chain (FGB) and the gamma chain (FGG).</text>
</comment>
<comment type="subunit">
    <text>Heterodimer of subunits A and B; disulfide-linked.</text>
</comment>
<comment type="subcellular location">
    <subcellularLocation>
        <location>Secreted</location>
    </subcellularLocation>
</comment>
<comment type="tissue specificity">
    <text>Expressed by the venom gland.</text>
</comment>
<comment type="similarity">
    <text evidence="6">Belongs to the snaclec family.</text>
</comment>
<keyword id="KW-1203">Blood coagulation cascade inhibiting toxin</keyword>
<keyword id="KW-0106">Calcium</keyword>
<keyword id="KW-0903">Direct protein sequencing</keyword>
<keyword id="KW-1015">Disulfide bond</keyword>
<keyword id="KW-1199">Hemostasis impairing toxin</keyword>
<keyword id="KW-0479">Metal-binding</keyword>
<keyword id="KW-1201">Platelet aggregation inhibiting toxin</keyword>
<keyword id="KW-0964">Secreted</keyword>
<keyword id="KW-0732">Signal</keyword>
<keyword id="KW-0800">Toxin</keyword>
<name>SLUB_DEIAC</name>
<evidence type="ECO:0000250" key="1"/>
<evidence type="ECO:0000255" key="2">
    <source>
        <dbReference type="PROSITE-ProRule" id="PRU00040"/>
    </source>
</evidence>
<evidence type="ECO:0000269" key="3">
    <source>
    </source>
</evidence>
<evidence type="ECO:0000269" key="4">
    <source>
    </source>
</evidence>
<evidence type="ECO:0000269" key="5">
    <source>
    </source>
</evidence>
<evidence type="ECO:0000305" key="6"/>
<sequence length="146" mass="16726">MGRFIFVSFGLLVVFLSLSGTAADCPSDWSSYEGHCYKPFDEPKTWADAEKFCTQQHKGSHLASFHSSEEADFVVTLTTPSLKTDLVWIGLKNIWNGCYWKWSDGTKLDYKDWREQFECLVSRTVNNEWLSMDCGTTCSFVCKFQA</sequence>
<feature type="signal peptide" evidence="3">
    <location>
        <begin position="1"/>
        <end position="23"/>
    </location>
</feature>
<feature type="chain" id="PRO_0000346756" description="Snaclec agkisacutacin subunit B">
    <location>
        <begin position="24"/>
        <end position="146"/>
    </location>
</feature>
<feature type="domain" description="C-type lectin" evidence="2">
    <location>
        <begin position="24"/>
        <end position="146"/>
    </location>
</feature>
<feature type="binding site" evidence="1">
    <location>
        <position position="64"/>
    </location>
    <ligand>
        <name>Ca(2+)</name>
        <dbReference type="ChEBI" id="CHEBI:29108"/>
    </ligand>
</feature>
<feature type="binding site" evidence="1">
    <location>
        <position position="70"/>
    </location>
    <ligand>
        <name>Ca(2+)</name>
        <dbReference type="ChEBI" id="CHEBI:29108"/>
    </ligand>
</feature>
<feature type="disulfide bond" evidence="2">
    <location>
        <begin position="25"/>
        <end position="36"/>
    </location>
</feature>
<feature type="disulfide bond" evidence="2">
    <location>
        <begin position="53"/>
        <end position="142"/>
    </location>
</feature>
<feature type="disulfide bond" description="Interchain (with C-102 in subunit A)" evidence="2">
    <location>
        <position position="98"/>
    </location>
</feature>
<feature type="disulfide bond" evidence="2">
    <location>
        <begin position="119"/>
        <end position="134"/>
    </location>
</feature>
<feature type="sequence conflict" description="In Ref. 2; AAM22785." evidence="6" ref="2">
    <original>D</original>
    <variation>E</variation>
    <location>
        <position position="28"/>
    </location>
</feature>
<protein>
    <recommendedName>
        <fullName>Snaclec agkisacutacin subunit B</fullName>
        <shortName>Agk-B</shortName>
    </recommendedName>
</protein>